<gene>
    <name type="primary">Gpr45</name>
</gene>
<evidence type="ECO:0000255" key="1"/>
<evidence type="ECO:0000255" key="2">
    <source>
        <dbReference type="PROSITE-ProRule" id="PRU00521"/>
    </source>
</evidence>
<dbReference type="EMBL" id="AF139642">
    <property type="protein sequence ID" value="AAG42572.1"/>
    <property type="molecule type" value="Genomic_DNA"/>
</dbReference>
<dbReference type="CCDS" id="CCDS14919.1"/>
<dbReference type="RefSeq" id="NP_444337.3">
    <property type="nucleotide sequence ID" value="NM_053107.4"/>
</dbReference>
<dbReference type="RefSeq" id="XP_006496409.1">
    <property type="nucleotide sequence ID" value="XM_006496346.4"/>
</dbReference>
<dbReference type="RefSeq" id="XP_006496410.1">
    <property type="nucleotide sequence ID" value="XM_006496347.4"/>
</dbReference>
<dbReference type="RefSeq" id="XP_006496411.1">
    <property type="nucleotide sequence ID" value="XM_006496348.2"/>
</dbReference>
<dbReference type="RefSeq" id="XP_017168482.1">
    <property type="nucleotide sequence ID" value="XM_017312993.3"/>
</dbReference>
<dbReference type="RefSeq" id="XP_036010355.1">
    <property type="nucleotide sequence ID" value="XM_036154462.1"/>
</dbReference>
<dbReference type="SMR" id="Q9EQQ4"/>
<dbReference type="FunCoup" id="Q9EQQ4">
    <property type="interactions" value="953"/>
</dbReference>
<dbReference type="STRING" id="10090.ENSMUSP00000135986"/>
<dbReference type="GlyCosmos" id="Q9EQQ4">
    <property type="glycosylation" value="1 site, No reported glycans"/>
</dbReference>
<dbReference type="GlyGen" id="Q9EQQ4">
    <property type="glycosylation" value="1 site"/>
</dbReference>
<dbReference type="iPTMnet" id="Q9EQQ4"/>
<dbReference type="PhosphoSitePlus" id="Q9EQQ4"/>
<dbReference type="PaxDb" id="10090-ENSMUSP00000135986"/>
<dbReference type="ProteomicsDB" id="271069"/>
<dbReference type="Antibodypedia" id="17832">
    <property type="antibodies" value="173 antibodies from 28 providers"/>
</dbReference>
<dbReference type="DNASU" id="93690"/>
<dbReference type="Ensembl" id="ENSMUST00000114761.2">
    <property type="protein sequence ID" value="ENSMUSP00000110409.2"/>
    <property type="gene ID" value="ENSMUSG00000041907.10"/>
</dbReference>
<dbReference type="Ensembl" id="ENSMUST00000179766.3">
    <property type="protein sequence ID" value="ENSMUSP00000135986.2"/>
    <property type="gene ID" value="ENSMUSG00000041907.10"/>
</dbReference>
<dbReference type="GeneID" id="93690"/>
<dbReference type="KEGG" id="mmu:93690"/>
<dbReference type="UCSC" id="uc007avd.2">
    <property type="organism name" value="mouse"/>
</dbReference>
<dbReference type="AGR" id="MGI:2135882"/>
<dbReference type="CTD" id="11250"/>
<dbReference type="MGI" id="MGI:2135882">
    <property type="gene designation" value="Gpr45"/>
</dbReference>
<dbReference type="VEuPathDB" id="HostDB:ENSMUSG00000041907"/>
<dbReference type="eggNOG" id="KOG3656">
    <property type="taxonomic scope" value="Eukaryota"/>
</dbReference>
<dbReference type="GeneTree" id="ENSGT00950000183001"/>
<dbReference type="HOGENOM" id="CLU_009579_3_9_1"/>
<dbReference type="InParanoid" id="Q9EQQ4"/>
<dbReference type="OMA" id="WHFGDYF"/>
<dbReference type="OrthoDB" id="10018052at2759"/>
<dbReference type="PhylomeDB" id="Q9EQQ4"/>
<dbReference type="TreeFam" id="TF338633"/>
<dbReference type="Reactome" id="R-MMU-418555">
    <property type="pathway name" value="G alpha (s) signalling events"/>
</dbReference>
<dbReference type="BioGRID-ORCS" id="93690">
    <property type="hits" value="5 hits in 78 CRISPR screens"/>
</dbReference>
<dbReference type="PRO" id="PR:Q9EQQ4"/>
<dbReference type="Proteomes" id="UP000000589">
    <property type="component" value="Chromosome 1"/>
</dbReference>
<dbReference type="RNAct" id="Q9EQQ4">
    <property type="molecule type" value="protein"/>
</dbReference>
<dbReference type="Bgee" id="ENSMUSG00000041907">
    <property type="expression patterns" value="Expressed in cortical plate and 63 other cell types or tissues"/>
</dbReference>
<dbReference type="ExpressionAtlas" id="Q9EQQ4">
    <property type="expression patterns" value="baseline and differential"/>
</dbReference>
<dbReference type="GO" id="GO:0016020">
    <property type="term" value="C:membrane"/>
    <property type="evidence" value="ECO:0000250"/>
    <property type="project" value="MGI"/>
</dbReference>
<dbReference type="GO" id="GO:0005886">
    <property type="term" value="C:plasma membrane"/>
    <property type="evidence" value="ECO:0007669"/>
    <property type="project" value="UniProtKB-SubCell"/>
</dbReference>
<dbReference type="GO" id="GO:0004930">
    <property type="term" value="F:G protein-coupled receptor activity"/>
    <property type="evidence" value="ECO:0000250"/>
    <property type="project" value="MGI"/>
</dbReference>
<dbReference type="FunFam" id="1.20.1070.10:FF:000080">
    <property type="entry name" value="probable G-protein coupled receptor 63"/>
    <property type="match status" value="1"/>
</dbReference>
<dbReference type="Gene3D" id="1.20.1070.10">
    <property type="entry name" value="Rhodopsin 7-helix transmembrane proteins"/>
    <property type="match status" value="1"/>
</dbReference>
<dbReference type="InterPro" id="IPR051880">
    <property type="entry name" value="GPC_Orphan_Receptors"/>
</dbReference>
<dbReference type="InterPro" id="IPR000276">
    <property type="entry name" value="GPCR_Rhodpsn"/>
</dbReference>
<dbReference type="InterPro" id="IPR017452">
    <property type="entry name" value="GPCR_Rhodpsn_7TM"/>
</dbReference>
<dbReference type="PANTHER" id="PTHR24245">
    <property type="entry name" value="G-PROTEIN COUPLED RECEPTOR"/>
    <property type="match status" value="1"/>
</dbReference>
<dbReference type="PANTHER" id="PTHR24245:SF4">
    <property type="entry name" value="G-PROTEIN COUPLED RECEPTOR 45-RELATED"/>
    <property type="match status" value="1"/>
</dbReference>
<dbReference type="Pfam" id="PF00001">
    <property type="entry name" value="7tm_1"/>
    <property type="match status" value="1"/>
</dbReference>
<dbReference type="PRINTS" id="PR00237">
    <property type="entry name" value="GPCRRHODOPSN"/>
</dbReference>
<dbReference type="SMART" id="SM01381">
    <property type="entry name" value="7TM_GPCR_Srsx"/>
    <property type="match status" value="1"/>
</dbReference>
<dbReference type="SUPFAM" id="SSF81321">
    <property type="entry name" value="Family A G protein-coupled receptor-like"/>
    <property type="match status" value="1"/>
</dbReference>
<dbReference type="PROSITE" id="PS50262">
    <property type="entry name" value="G_PROTEIN_RECEP_F1_2"/>
    <property type="match status" value="1"/>
</dbReference>
<accession>Q9EQQ4</accession>
<keyword id="KW-1003">Cell membrane</keyword>
<keyword id="KW-0297">G-protein coupled receptor</keyword>
<keyword id="KW-0325">Glycoprotein</keyword>
<keyword id="KW-0472">Membrane</keyword>
<keyword id="KW-0675">Receptor</keyword>
<keyword id="KW-1185">Reference proteome</keyword>
<keyword id="KW-0807">Transducer</keyword>
<keyword id="KW-0812">Transmembrane</keyword>
<keyword id="KW-1133">Transmembrane helix</keyword>
<protein>
    <recommendedName>
        <fullName>Probable G-protein coupled receptor 45</fullName>
    </recommendedName>
    <alternativeName>
        <fullName>PSP24-1</fullName>
    </alternativeName>
    <alternativeName>
        <fullName>PSP24-alpha</fullName>
    </alternativeName>
</protein>
<comment type="function">
    <text>Orphan receptor. May play a role in brain function.</text>
</comment>
<comment type="subcellular location">
    <subcellularLocation>
        <location>Cell membrane</location>
        <topology>Multi-pass membrane protein</topology>
    </subcellularLocation>
</comment>
<comment type="tissue specificity">
    <text>Brain specific.</text>
</comment>
<comment type="similarity">
    <text evidence="2">Belongs to the G-protein coupled receptor 1 family.</text>
</comment>
<reference key="1">
    <citation type="journal article" date="2000" name="Biochem. Biophys. Res. Commun.">
        <title>Brain-specific expression of novel G-protein-coupled receptors, with homologies to Xenopus PSP24 and human GPR45.</title>
        <authorList>
            <person name="Kawasawa Y."/>
            <person name="Kume K."/>
            <person name="Nakade S."/>
            <person name="Haga H."/>
            <person name="Izumi T."/>
            <person name="Shimizu T."/>
        </authorList>
    </citation>
    <scope>NUCLEOTIDE SEQUENCE [GENOMIC DNA]</scope>
</reference>
<proteinExistence type="evidence at transcript level"/>
<organism>
    <name type="scientific">Mus musculus</name>
    <name type="common">Mouse</name>
    <dbReference type="NCBI Taxonomy" id="10090"/>
    <lineage>
        <taxon>Eukaryota</taxon>
        <taxon>Metazoa</taxon>
        <taxon>Chordata</taxon>
        <taxon>Craniata</taxon>
        <taxon>Vertebrata</taxon>
        <taxon>Euteleostomi</taxon>
        <taxon>Mammalia</taxon>
        <taxon>Eutheria</taxon>
        <taxon>Euarchontoglires</taxon>
        <taxon>Glires</taxon>
        <taxon>Rodentia</taxon>
        <taxon>Myomorpha</taxon>
        <taxon>Muroidea</taxon>
        <taxon>Muridae</taxon>
        <taxon>Murinae</taxon>
        <taxon>Mus</taxon>
        <taxon>Mus</taxon>
    </lineage>
</organism>
<sequence>MACNSTPMGTYEHLLLNVSNTLDPGDTPLSAPLRISLAIMMLLMIVVGFLGNTVVCIIVYQRPAMRSAINLLLATLAFSDIMLSLCCMPFTAITLITVRWHFGDHFCRLSATLYWFFVLEGVAILLIISVDRFLIIVQRQDKLNPRRAKMIIAASWVLSFCISAPSFTGWTFMEVPARAPQCVLGYTEFPAERAYVVTLVVAVFFAPFGVMLCSYLCILNTVRKNAVRVHNQSDSLDLRQLTGAGLRRLRRQQQQASLDLSFKTKAFTTILILFVGFSLCWLPHSVYSLLSAFSRRFYYSASFYTTSTCVLWLSYLKSVFNPIVYCWRIKKFREACIELLPHTFQILPKVPERIQRKIQPSTIYVCNENQSAV</sequence>
<name>GPR45_MOUSE</name>
<feature type="chain" id="PRO_0000069575" description="Probable G-protein coupled receptor 45">
    <location>
        <begin position="1"/>
        <end position="373"/>
    </location>
</feature>
<feature type="topological domain" description="Extracellular" evidence="1">
    <location>
        <begin position="1"/>
        <end position="38"/>
    </location>
</feature>
<feature type="transmembrane region" description="Helical; Name=1" evidence="1">
    <location>
        <begin position="39"/>
        <end position="59"/>
    </location>
</feature>
<feature type="topological domain" description="Cytoplasmic" evidence="1">
    <location>
        <begin position="60"/>
        <end position="75"/>
    </location>
</feature>
<feature type="transmembrane region" description="Helical; Name=2" evidence="1">
    <location>
        <begin position="76"/>
        <end position="96"/>
    </location>
</feature>
<feature type="topological domain" description="Extracellular" evidence="1">
    <location>
        <begin position="97"/>
        <end position="109"/>
    </location>
</feature>
<feature type="transmembrane region" description="Helical; Name=3" evidence="1">
    <location>
        <begin position="110"/>
        <end position="130"/>
    </location>
</feature>
<feature type="topological domain" description="Cytoplasmic" evidence="1">
    <location>
        <begin position="131"/>
        <end position="149"/>
    </location>
</feature>
<feature type="transmembrane region" description="Helical; Name=4" evidence="1">
    <location>
        <begin position="150"/>
        <end position="170"/>
    </location>
</feature>
<feature type="topological domain" description="Extracellular" evidence="1">
    <location>
        <begin position="171"/>
        <end position="198"/>
    </location>
</feature>
<feature type="transmembrane region" description="Helical; Name=5" evidence="1">
    <location>
        <begin position="199"/>
        <end position="219"/>
    </location>
</feature>
<feature type="topological domain" description="Cytoplasmic" evidence="1">
    <location>
        <begin position="220"/>
        <end position="269"/>
    </location>
</feature>
<feature type="transmembrane region" description="Helical; Name=6" evidence="1">
    <location>
        <begin position="270"/>
        <end position="290"/>
    </location>
</feature>
<feature type="topological domain" description="Extracellular" evidence="1">
    <location>
        <begin position="291"/>
        <end position="306"/>
    </location>
</feature>
<feature type="transmembrane region" description="Helical; Name=7" evidence="1">
    <location>
        <begin position="307"/>
        <end position="327"/>
    </location>
</feature>
<feature type="topological domain" description="Cytoplasmic" evidence="1">
    <location>
        <begin position="328"/>
        <end position="373"/>
    </location>
</feature>
<feature type="glycosylation site" description="N-linked (GlcNAc...) asparagine" evidence="1">
    <location>
        <position position="17"/>
    </location>
</feature>